<evidence type="ECO:0000255" key="1">
    <source>
        <dbReference type="HAMAP-Rule" id="MF_00101"/>
    </source>
</evidence>
<sequence length="122" mass="13799">MIFGIGTDMIEINRVVKACERKTFLTKIYTEQEQKLLLSDIRKAASNFAVKEAVVKMFGTGFRAIAPNEIEVLRDNLGKPYVNLYGNAEILAKEHNVERIHVSITNTKELVSAYVIGEIIRE</sequence>
<protein>
    <recommendedName>
        <fullName evidence="1">Holo-[acyl-carrier-protein] synthase</fullName>
        <shortName evidence="1">Holo-ACP synthase</shortName>
        <ecNumber evidence="1">2.7.8.7</ecNumber>
    </recommendedName>
    <alternativeName>
        <fullName evidence="1">4'-phosphopantetheinyl transferase AcpS</fullName>
    </alternativeName>
</protein>
<dbReference type="EC" id="2.7.8.7" evidence="1"/>
<dbReference type="EMBL" id="CP000885">
    <property type="protein sequence ID" value="ABX41288.1"/>
    <property type="molecule type" value="Genomic_DNA"/>
</dbReference>
<dbReference type="RefSeq" id="WP_012198933.1">
    <property type="nucleotide sequence ID" value="NC_010001.1"/>
</dbReference>
<dbReference type="SMR" id="A9KLF9"/>
<dbReference type="STRING" id="357809.Cphy_0903"/>
<dbReference type="KEGG" id="cpy:Cphy_0903"/>
<dbReference type="eggNOG" id="COG0736">
    <property type="taxonomic scope" value="Bacteria"/>
</dbReference>
<dbReference type="HOGENOM" id="CLU_089696_0_2_9"/>
<dbReference type="OrthoDB" id="517356at2"/>
<dbReference type="Proteomes" id="UP000000370">
    <property type="component" value="Chromosome"/>
</dbReference>
<dbReference type="GO" id="GO:0005737">
    <property type="term" value="C:cytoplasm"/>
    <property type="evidence" value="ECO:0007669"/>
    <property type="project" value="UniProtKB-SubCell"/>
</dbReference>
<dbReference type="GO" id="GO:0008897">
    <property type="term" value="F:holo-[acyl-carrier-protein] synthase activity"/>
    <property type="evidence" value="ECO:0007669"/>
    <property type="project" value="UniProtKB-UniRule"/>
</dbReference>
<dbReference type="GO" id="GO:0000287">
    <property type="term" value="F:magnesium ion binding"/>
    <property type="evidence" value="ECO:0007669"/>
    <property type="project" value="UniProtKB-UniRule"/>
</dbReference>
<dbReference type="GO" id="GO:0006633">
    <property type="term" value="P:fatty acid biosynthetic process"/>
    <property type="evidence" value="ECO:0007669"/>
    <property type="project" value="UniProtKB-UniRule"/>
</dbReference>
<dbReference type="Gene3D" id="3.90.470.20">
    <property type="entry name" value="4'-phosphopantetheinyl transferase domain"/>
    <property type="match status" value="1"/>
</dbReference>
<dbReference type="HAMAP" id="MF_00101">
    <property type="entry name" value="AcpS"/>
    <property type="match status" value="1"/>
</dbReference>
<dbReference type="InterPro" id="IPR008278">
    <property type="entry name" value="4-PPantetheinyl_Trfase_dom"/>
</dbReference>
<dbReference type="InterPro" id="IPR037143">
    <property type="entry name" value="4-PPantetheinyl_Trfase_dom_sf"/>
</dbReference>
<dbReference type="InterPro" id="IPR002582">
    <property type="entry name" value="ACPS"/>
</dbReference>
<dbReference type="InterPro" id="IPR004568">
    <property type="entry name" value="Ppantetheine-prot_Trfase_dom"/>
</dbReference>
<dbReference type="NCBIfam" id="TIGR00516">
    <property type="entry name" value="acpS"/>
    <property type="match status" value="1"/>
</dbReference>
<dbReference type="NCBIfam" id="TIGR00556">
    <property type="entry name" value="pantethn_trn"/>
    <property type="match status" value="1"/>
</dbReference>
<dbReference type="Pfam" id="PF01648">
    <property type="entry name" value="ACPS"/>
    <property type="match status" value="1"/>
</dbReference>
<dbReference type="SUPFAM" id="SSF56214">
    <property type="entry name" value="4'-phosphopantetheinyl transferase"/>
    <property type="match status" value="1"/>
</dbReference>
<keyword id="KW-0963">Cytoplasm</keyword>
<keyword id="KW-0275">Fatty acid biosynthesis</keyword>
<keyword id="KW-0276">Fatty acid metabolism</keyword>
<keyword id="KW-0444">Lipid biosynthesis</keyword>
<keyword id="KW-0443">Lipid metabolism</keyword>
<keyword id="KW-0460">Magnesium</keyword>
<keyword id="KW-0479">Metal-binding</keyword>
<keyword id="KW-1185">Reference proteome</keyword>
<keyword id="KW-0808">Transferase</keyword>
<gene>
    <name evidence="1" type="primary">acpS</name>
    <name type="ordered locus">Cphy_0903</name>
</gene>
<name>ACPS_LACP7</name>
<feature type="chain" id="PRO_1000075637" description="Holo-[acyl-carrier-protein] synthase">
    <location>
        <begin position="1"/>
        <end position="122"/>
    </location>
</feature>
<feature type="binding site" evidence="1">
    <location>
        <position position="8"/>
    </location>
    <ligand>
        <name>Mg(2+)</name>
        <dbReference type="ChEBI" id="CHEBI:18420"/>
    </ligand>
</feature>
<feature type="binding site" evidence="1">
    <location>
        <position position="52"/>
    </location>
    <ligand>
        <name>Mg(2+)</name>
        <dbReference type="ChEBI" id="CHEBI:18420"/>
    </ligand>
</feature>
<comment type="function">
    <text evidence="1">Transfers the 4'-phosphopantetheine moiety from coenzyme A to a Ser of acyl-carrier-protein.</text>
</comment>
<comment type="catalytic activity">
    <reaction evidence="1">
        <text>apo-[ACP] + CoA = holo-[ACP] + adenosine 3',5'-bisphosphate + H(+)</text>
        <dbReference type="Rhea" id="RHEA:12068"/>
        <dbReference type="Rhea" id="RHEA-COMP:9685"/>
        <dbReference type="Rhea" id="RHEA-COMP:9690"/>
        <dbReference type="ChEBI" id="CHEBI:15378"/>
        <dbReference type="ChEBI" id="CHEBI:29999"/>
        <dbReference type="ChEBI" id="CHEBI:57287"/>
        <dbReference type="ChEBI" id="CHEBI:58343"/>
        <dbReference type="ChEBI" id="CHEBI:64479"/>
        <dbReference type="EC" id="2.7.8.7"/>
    </reaction>
</comment>
<comment type="cofactor">
    <cofactor evidence="1">
        <name>Mg(2+)</name>
        <dbReference type="ChEBI" id="CHEBI:18420"/>
    </cofactor>
</comment>
<comment type="subcellular location">
    <subcellularLocation>
        <location evidence="1">Cytoplasm</location>
    </subcellularLocation>
</comment>
<comment type="similarity">
    <text evidence="1">Belongs to the P-Pant transferase superfamily. AcpS family.</text>
</comment>
<reference key="1">
    <citation type="submission" date="2007-11" db="EMBL/GenBank/DDBJ databases">
        <title>Complete genome sequence of Clostridium phytofermentans ISDg.</title>
        <authorList>
            <person name="Leschine S.B."/>
            <person name="Warnick T.A."/>
            <person name="Blanchard J.L."/>
            <person name="Schnell D.J."/>
            <person name="Petit E.L."/>
            <person name="LaTouf W.G."/>
            <person name="Copeland A."/>
            <person name="Lucas S."/>
            <person name="Lapidus A."/>
            <person name="Barry K."/>
            <person name="Glavina del Rio T."/>
            <person name="Dalin E."/>
            <person name="Tice H."/>
            <person name="Pitluck S."/>
            <person name="Kiss H."/>
            <person name="Brettin T."/>
            <person name="Bruce D."/>
            <person name="Detter J.C."/>
            <person name="Han C."/>
            <person name="Kuske C."/>
            <person name="Schmutz J."/>
            <person name="Larimer F."/>
            <person name="Land M."/>
            <person name="Hauser L."/>
            <person name="Kyrpides N."/>
            <person name="Kim E.A."/>
            <person name="Richardson P."/>
        </authorList>
    </citation>
    <scope>NUCLEOTIDE SEQUENCE [LARGE SCALE GENOMIC DNA]</scope>
    <source>
        <strain>ATCC 700394 / DSM 18823 / ISDg</strain>
    </source>
</reference>
<accession>A9KLF9</accession>
<proteinExistence type="inferred from homology"/>
<organism>
    <name type="scientific">Lachnoclostridium phytofermentans (strain ATCC 700394 / DSM 18823 / ISDg)</name>
    <name type="common">Clostridium phytofermentans</name>
    <dbReference type="NCBI Taxonomy" id="357809"/>
    <lineage>
        <taxon>Bacteria</taxon>
        <taxon>Bacillati</taxon>
        <taxon>Bacillota</taxon>
        <taxon>Clostridia</taxon>
        <taxon>Lachnospirales</taxon>
        <taxon>Lachnospiraceae</taxon>
    </lineage>
</organism>